<comment type="similarity">
    <text evidence="1">To M.tuberculosis Rv2798c.</text>
</comment>
<comment type="sequence caution" evidence="1">
    <conflict type="erroneous initiation">
        <sequence resource="EMBL-CDS" id="AAK45242"/>
    </conflict>
</comment>
<gene>
    <name type="ordered locus">MT0993</name>
</gene>
<keyword id="KW-1185">Reference proteome</keyword>
<organism>
    <name type="scientific">Mycobacterium tuberculosis (strain CDC 1551 / Oshkosh)</name>
    <dbReference type="NCBI Taxonomy" id="83331"/>
    <lineage>
        <taxon>Bacteria</taxon>
        <taxon>Bacillati</taxon>
        <taxon>Actinomycetota</taxon>
        <taxon>Actinomycetes</taxon>
        <taxon>Mycobacteriales</taxon>
        <taxon>Mycobacteriaceae</taxon>
        <taxon>Mycobacterium</taxon>
        <taxon>Mycobacterium tuberculosis complex</taxon>
    </lineage>
</organism>
<dbReference type="EMBL" id="AE000516">
    <property type="protein sequence ID" value="AAK45242.1"/>
    <property type="status" value="ALT_INIT"/>
    <property type="molecule type" value="Genomic_DNA"/>
</dbReference>
<dbReference type="PIR" id="C70718">
    <property type="entry name" value="C70718"/>
</dbReference>
<dbReference type="RefSeq" id="WP_003404920.1">
    <property type="nucleotide sequence ID" value="NZ_KK341227.1"/>
</dbReference>
<dbReference type="SMR" id="P9WKM2"/>
<dbReference type="KEGG" id="mtc:MT0993"/>
<dbReference type="PATRIC" id="fig|83331.31.peg.1065"/>
<dbReference type="HOGENOM" id="CLU_2058765_0_0_11"/>
<dbReference type="Proteomes" id="UP000001020">
    <property type="component" value="Chromosome"/>
</dbReference>
<evidence type="ECO:0000305" key="1"/>
<reference key="1">
    <citation type="journal article" date="2002" name="J. Bacteriol.">
        <title>Whole-genome comparison of Mycobacterium tuberculosis clinical and laboratory strains.</title>
        <authorList>
            <person name="Fleischmann R.D."/>
            <person name="Alland D."/>
            <person name="Eisen J.A."/>
            <person name="Carpenter L."/>
            <person name="White O."/>
            <person name="Peterson J.D."/>
            <person name="DeBoy R.T."/>
            <person name="Dodson R.J."/>
            <person name="Gwinn M.L."/>
            <person name="Haft D.H."/>
            <person name="Hickey E.K."/>
            <person name="Kolonay J.F."/>
            <person name="Nelson W.C."/>
            <person name="Umayam L.A."/>
            <person name="Ermolaeva M.D."/>
            <person name="Salzberg S.L."/>
            <person name="Delcher A."/>
            <person name="Utterback T.R."/>
            <person name="Weidman J.F."/>
            <person name="Khouri H.M."/>
            <person name="Gill J."/>
            <person name="Mikula A."/>
            <person name="Bishai W."/>
            <person name="Jacobs W.R. Jr."/>
            <person name="Venter J.C."/>
            <person name="Fraser C.M."/>
        </authorList>
    </citation>
    <scope>NUCLEOTIDE SEQUENCE [LARGE SCALE GENOMIC DNA]</scope>
    <source>
        <strain>CDC 1551 / Oshkosh</strain>
    </source>
</reference>
<protein>
    <recommendedName>
        <fullName>Uncharacterized protein MT0993</fullName>
    </recommendedName>
</protein>
<name>Y965_MYCTO</name>
<accession>P9WKM2</accession>
<accession>L0T6X9</accession>
<accession>P71545</accession>
<feature type="chain" id="PRO_0000427629" description="Uncharacterized protein MT0993">
    <location>
        <begin position="1"/>
        <end position="139"/>
    </location>
</feature>
<sequence length="139" mass="14479">MRVNRPQCARVPYSAESLVRVEASWYGRTLRAIPEVLSQVGYQQADHGESLLTSHHCCLGAAEGARPGWVGSSAGALSGLLDSWAEASTAHAARIGDHSYGMHLAAVGFAEMEEHNAAALAAVYPTGGGSARCDGVDVS</sequence>
<proteinExistence type="predicted"/>